<proteinExistence type="inferred from homology"/>
<name>RL14_NEOSM</name>
<feature type="chain" id="PRO_0000355827" description="Large ribosomal subunit protein uL14">
    <location>
        <begin position="1"/>
        <end position="119"/>
    </location>
</feature>
<reference key="1">
    <citation type="journal article" date="2006" name="PLoS Genet.">
        <title>Comparative genomics of emerging human ehrlichiosis agents.</title>
        <authorList>
            <person name="Dunning Hotopp J.C."/>
            <person name="Lin M."/>
            <person name="Madupu R."/>
            <person name="Crabtree J."/>
            <person name="Angiuoli S.V."/>
            <person name="Eisen J.A."/>
            <person name="Seshadri R."/>
            <person name="Ren Q."/>
            <person name="Wu M."/>
            <person name="Utterback T.R."/>
            <person name="Smith S."/>
            <person name="Lewis M."/>
            <person name="Khouri H."/>
            <person name="Zhang C."/>
            <person name="Niu H."/>
            <person name="Lin Q."/>
            <person name="Ohashi N."/>
            <person name="Zhi N."/>
            <person name="Nelson W.C."/>
            <person name="Brinkac L.M."/>
            <person name="Dodson R.J."/>
            <person name="Rosovitz M.J."/>
            <person name="Sundaram J.P."/>
            <person name="Daugherty S.C."/>
            <person name="Davidsen T."/>
            <person name="Durkin A.S."/>
            <person name="Gwinn M.L."/>
            <person name="Haft D.H."/>
            <person name="Selengut J.D."/>
            <person name="Sullivan S.A."/>
            <person name="Zafar N."/>
            <person name="Zhou L."/>
            <person name="Benahmed F."/>
            <person name="Forberger H."/>
            <person name="Halpin R."/>
            <person name="Mulligan S."/>
            <person name="Robinson J."/>
            <person name="White O."/>
            <person name="Rikihisa Y."/>
            <person name="Tettelin H."/>
        </authorList>
    </citation>
    <scope>NUCLEOTIDE SEQUENCE [LARGE SCALE GENOMIC DNA]</scope>
    <source>
        <strain>ATCC VR-367 / Miyayama</strain>
    </source>
</reference>
<comment type="function">
    <text evidence="1">Binds to 23S rRNA. Forms part of two intersubunit bridges in the 70S ribosome.</text>
</comment>
<comment type="subunit">
    <text evidence="1">Part of the 50S ribosomal subunit. Forms a cluster with proteins L3 and L19. In the 70S ribosome, L14 and L19 interact and together make contacts with the 16S rRNA in bridges B5 and B8.</text>
</comment>
<comment type="similarity">
    <text evidence="1">Belongs to the universal ribosomal protein uL14 family.</text>
</comment>
<organism>
    <name type="scientific">Neorickettsia sennetsu (strain ATCC VR-367 / Miyayama)</name>
    <name type="common">Ehrlichia sennetsu</name>
    <dbReference type="NCBI Taxonomy" id="222891"/>
    <lineage>
        <taxon>Bacteria</taxon>
        <taxon>Pseudomonadati</taxon>
        <taxon>Pseudomonadota</taxon>
        <taxon>Alphaproteobacteria</taxon>
        <taxon>Rickettsiales</taxon>
        <taxon>Anaplasmataceae</taxon>
        <taxon>Neorickettsia</taxon>
    </lineage>
</organism>
<keyword id="KW-0687">Ribonucleoprotein</keyword>
<keyword id="KW-0689">Ribosomal protein</keyword>
<keyword id="KW-0694">RNA-binding</keyword>
<keyword id="KW-0699">rRNA-binding</keyword>
<gene>
    <name evidence="1" type="primary">rplN</name>
    <name type="ordered locus">NSE_0276</name>
</gene>
<sequence length="119" mass="12672">MIKKETVLDVADNSGARKVLCIGISGSKKTASIGDVITVSVKKCIPVGKVSAGSIHRAVVVRVKKRSSSSIVVFGDNAVVLLNKQNEMIGTRVFGPTDSLLRRNKGFAKISSLSQEVFQ</sequence>
<dbReference type="EMBL" id="CP000237">
    <property type="protein sequence ID" value="ABD45658.1"/>
    <property type="molecule type" value="Genomic_DNA"/>
</dbReference>
<dbReference type="RefSeq" id="WP_011451673.1">
    <property type="nucleotide sequence ID" value="NC_007798.1"/>
</dbReference>
<dbReference type="SMR" id="Q2GEC9"/>
<dbReference type="STRING" id="222891.NSE_0276"/>
<dbReference type="KEGG" id="nse:NSE_0276"/>
<dbReference type="eggNOG" id="COG0093">
    <property type="taxonomic scope" value="Bacteria"/>
</dbReference>
<dbReference type="HOGENOM" id="CLU_095071_2_2_5"/>
<dbReference type="OrthoDB" id="9806379at2"/>
<dbReference type="Proteomes" id="UP000001942">
    <property type="component" value="Chromosome"/>
</dbReference>
<dbReference type="GO" id="GO:0022625">
    <property type="term" value="C:cytosolic large ribosomal subunit"/>
    <property type="evidence" value="ECO:0007669"/>
    <property type="project" value="TreeGrafter"/>
</dbReference>
<dbReference type="GO" id="GO:0070180">
    <property type="term" value="F:large ribosomal subunit rRNA binding"/>
    <property type="evidence" value="ECO:0007669"/>
    <property type="project" value="TreeGrafter"/>
</dbReference>
<dbReference type="GO" id="GO:0003735">
    <property type="term" value="F:structural constituent of ribosome"/>
    <property type="evidence" value="ECO:0007669"/>
    <property type="project" value="InterPro"/>
</dbReference>
<dbReference type="GO" id="GO:0006412">
    <property type="term" value="P:translation"/>
    <property type="evidence" value="ECO:0007669"/>
    <property type="project" value="UniProtKB-UniRule"/>
</dbReference>
<dbReference type="CDD" id="cd00337">
    <property type="entry name" value="Ribosomal_uL14"/>
    <property type="match status" value="1"/>
</dbReference>
<dbReference type="Gene3D" id="2.40.150.20">
    <property type="entry name" value="Ribosomal protein L14"/>
    <property type="match status" value="1"/>
</dbReference>
<dbReference type="HAMAP" id="MF_01367">
    <property type="entry name" value="Ribosomal_uL14"/>
    <property type="match status" value="1"/>
</dbReference>
<dbReference type="InterPro" id="IPR000218">
    <property type="entry name" value="Ribosomal_uL14"/>
</dbReference>
<dbReference type="InterPro" id="IPR005745">
    <property type="entry name" value="Ribosomal_uL14_bac-type"/>
</dbReference>
<dbReference type="InterPro" id="IPR036853">
    <property type="entry name" value="Ribosomal_uL14_sf"/>
</dbReference>
<dbReference type="NCBIfam" id="TIGR01067">
    <property type="entry name" value="rplN_bact"/>
    <property type="match status" value="1"/>
</dbReference>
<dbReference type="PANTHER" id="PTHR11761">
    <property type="entry name" value="50S/60S RIBOSOMAL PROTEIN L14/L23"/>
    <property type="match status" value="1"/>
</dbReference>
<dbReference type="PANTHER" id="PTHR11761:SF3">
    <property type="entry name" value="LARGE RIBOSOMAL SUBUNIT PROTEIN UL14M"/>
    <property type="match status" value="1"/>
</dbReference>
<dbReference type="Pfam" id="PF00238">
    <property type="entry name" value="Ribosomal_L14"/>
    <property type="match status" value="1"/>
</dbReference>
<dbReference type="SMART" id="SM01374">
    <property type="entry name" value="Ribosomal_L14"/>
    <property type="match status" value="1"/>
</dbReference>
<dbReference type="SUPFAM" id="SSF50193">
    <property type="entry name" value="Ribosomal protein L14"/>
    <property type="match status" value="1"/>
</dbReference>
<accession>Q2GEC9</accession>
<evidence type="ECO:0000255" key="1">
    <source>
        <dbReference type="HAMAP-Rule" id="MF_01367"/>
    </source>
</evidence>
<evidence type="ECO:0000305" key="2"/>
<protein>
    <recommendedName>
        <fullName evidence="1">Large ribosomal subunit protein uL14</fullName>
    </recommendedName>
    <alternativeName>
        <fullName evidence="2">50S ribosomal protein L14</fullName>
    </alternativeName>
</protein>